<geneLocation type="non-photosynthetic plastid"/>
<reference key="1">
    <citation type="journal article" date="2000" name="Protist">
        <title>Complete gene map of the plastid genome of the nonphotosynthetic euglenoid flagellate Astasia longa.</title>
        <authorList>
            <person name="Gockel G."/>
            <person name="Hachtel W."/>
        </authorList>
    </citation>
    <scope>NUCLEOTIDE SEQUENCE [LARGE SCALE GENOMIC DNA]</scope>
    <source>
        <strain>CCAP 1204-17a</strain>
    </source>
</reference>
<accession>P58147</accession>
<protein>
    <recommendedName>
        <fullName>Uncharacterized 32.5 kDa protein in rpl14-rpl12 intergenic region</fullName>
    </recommendedName>
    <alternativeName>
        <fullName>ORF263</fullName>
    </alternativeName>
</protein>
<sequence length="263" mass="32474">MYKTKIFYKSGLFLHGRRYIYRKPKETNYWKNYIIVPLYINDKEVGIDKTISEPEYILLDIILYGPLKIKLSEYFNLNNKIIDRTTTYKKLLEKNTIYGINFNFTFPILLNFKDSENKYQLKEYLDFNNILQIYLIENKKYIYRELRSKFDWDEYNVLKIRLYVNHKSVIFIKDKYLEEPTELEYIVLDLFLLGPLEKEYSENYKIIYLINERNKRYKDMYDMGEIYGINIRFDKLDYFKFLNSEYSTEERIYEKILFIYIIT</sequence>
<comment type="subcellular location">
    <subcellularLocation>
        <location>Plastid</location>
    </subcellularLocation>
</comment>
<comment type="similarity">
    <text evidence="1">Belongs to the A.longa ORF167/ORF288 family.</text>
</comment>
<proteinExistence type="inferred from homology"/>
<evidence type="ECO:0000305" key="1"/>
<keyword id="KW-0934">Plastid</keyword>
<dbReference type="EMBL" id="AJ294725">
    <property type="protein sequence ID" value="CAC24603.1"/>
    <property type="molecule type" value="Genomic_DNA"/>
</dbReference>
<dbReference type="RefSeq" id="NP_074992.1">
    <property type="nucleotide sequence ID" value="NC_002652.1"/>
</dbReference>
<dbReference type="GeneID" id="1457316"/>
<dbReference type="GO" id="GO:0009536">
    <property type="term" value="C:plastid"/>
    <property type="evidence" value="ECO:0007669"/>
    <property type="project" value="UniProtKB-SubCell"/>
</dbReference>
<dbReference type="InterPro" id="IPR006851">
    <property type="entry name" value="DUF613"/>
</dbReference>
<dbReference type="Pfam" id="PF04764">
    <property type="entry name" value="DUF613"/>
    <property type="match status" value="2"/>
</dbReference>
<organism>
    <name type="scientific">Euglena longa</name>
    <name type="common">Euglenophycean alga</name>
    <name type="synonym">Astasia longa</name>
    <dbReference type="NCBI Taxonomy" id="3037"/>
    <lineage>
        <taxon>Eukaryota</taxon>
        <taxon>Discoba</taxon>
        <taxon>Euglenozoa</taxon>
        <taxon>Euglenida</taxon>
        <taxon>Spirocuta</taxon>
        <taxon>Euglenophyceae</taxon>
        <taxon>Euglenales</taxon>
        <taxon>Euglenaceae</taxon>
        <taxon>Euglena</taxon>
    </lineage>
</organism>
<feature type="chain" id="PRO_0000217419" description="Uncharacterized 32.5 kDa protein in rpl14-rpl12 intergenic region">
    <location>
        <begin position="1"/>
        <end position="263"/>
    </location>
</feature>
<name>YCY3_EUGLO</name>